<sequence>MIGDILLFGTLLMNAGAVLNFKLKKKDTQGFGEESKEPSTGDNIREFLLSLRYFRIFIALWNVFMMLCMIVLFGS</sequence>
<name>SMIM7_MOUSE</name>
<reference key="1">
    <citation type="journal article" date="2004" name="Genome Res.">
        <title>The status, quality, and expansion of the NIH full-length cDNA project: the Mammalian Gene Collection (MGC).</title>
        <authorList>
            <consortium name="The MGC Project Team"/>
        </authorList>
    </citation>
    <scope>NUCLEOTIDE SEQUENCE [LARGE SCALE MRNA]</scope>
    <source>
        <strain>C57BL/6J</strain>
        <tissue>Brain</tissue>
        <tissue>Mammary gland</tissue>
    </source>
</reference>
<keyword id="KW-0472">Membrane</keyword>
<keyword id="KW-1185">Reference proteome</keyword>
<keyword id="KW-0732">Signal</keyword>
<keyword id="KW-0812">Transmembrane</keyword>
<keyword id="KW-1133">Transmembrane helix</keyword>
<proteinExistence type="inferred from homology"/>
<organism>
    <name type="scientific">Mus musculus</name>
    <name type="common">Mouse</name>
    <dbReference type="NCBI Taxonomy" id="10090"/>
    <lineage>
        <taxon>Eukaryota</taxon>
        <taxon>Metazoa</taxon>
        <taxon>Chordata</taxon>
        <taxon>Craniata</taxon>
        <taxon>Vertebrata</taxon>
        <taxon>Euteleostomi</taxon>
        <taxon>Mammalia</taxon>
        <taxon>Eutheria</taxon>
        <taxon>Euarchontoglires</taxon>
        <taxon>Glires</taxon>
        <taxon>Rodentia</taxon>
        <taxon>Myomorpha</taxon>
        <taxon>Muroidea</taxon>
        <taxon>Muridae</taxon>
        <taxon>Murinae</taxon>
        <taxon>Mus</taxon>
        <taxon>Mus</taxon>
    </lineage>
</organism>
<feature type="signal peptide" evidence="1">
    <location>
        <begin position="1"/>
        <end position="17"/>
    </location>
</feature>
<feature type="chain" id="PRO_0000342614" description="Small integral membrane protein 7">
    <location>
        <begin position="18"/>
        <end position="75"/>
    </location>
</feature>
<feature type="topological domain" description="Extracellular" evidence="1">
    <location>
        <begin position="18"/>
        <end position="53"/>
    </location>
</feature>
<feature type="transmembrane region" description="Helical" evidence="1">
    <location>
        <begin position="54"/>
        <end position="74"/>
    </location>
</feature>
<feature type="topological domain" description="Cytoplasmic" evidence="1">
    <location>
        <position position="75"/>
    </location>
</feature>
<evidence type="ECO:0000255" key="1"/>
<evidence type="ECO:0000305" key="2"/>
<protein>
    <recommendedName>
        <fullName>Small integral membrane protein 7</fullName>
    </recommendedName>
</protein>
<gene>
    <name type="primary">Smim7</name>
</gene>
<accession>Q5RKS2</accession>
<dbReference type="EMBL" id="BC037511">
    <property type="protein sequence ID" value="AAH37511.1"/>
    <property type="molecule type" value="mRNA"/>
</dbReference>
<dbReference type="EMBL" id="BC055692">
    <property type="protein sequence ID" value="AAH55692.1"/>
    <property type="molecule type" value="mRNA"/>
</dbReference>
<dbReference type="CCDS" id="CCDS40390.1"/>
<dbReference type="RefSeq" id="NP_765984.1">
    <property type="nucleotide sequence ID" value="NM_172396.3"/>
</dbReference>
<dbReference type="BioGRID" id="211739">
    <property type="interactions" value="2"/>
</dbReference>
<dbReference type="FunCoup" id="Q5RKS2">
    <property type="interactions" value="45"/>
</dbReference>
<dbReference type="STRING" id="10090.ENSMUSP00000127441"/>
<dbReference type="PhosphoSitePlus" id="Q5RKS2"/>
<dbReference type="PaxDb" id="10090-ENSMUSP00000127441"/>
<dbReference type="ProteomicsDB" id="257207"/>
<dbReference type="Pumba" id="Q5RKS2"/>
<dbReference type="Antibodypedia" id="27426">
    <property type="antibodies" value="12 antibodies from 7 providers"/>
</dbReference>
<dbReference type="DNASU" id="66818"/>
<dbReference type="Ensembl" id="ENSMUST00000167290.8">
    <property type="protein sequence ID" value="ENSMUSP00000127441.2"/>
    <property type="gene ID" value="ENSMUSG00000044600.15"/>
</dbReference>
<dbReference type="GeneID" id="66818"/>
<dbReference type="KEGG" id="mmu:66818"/>
<dbReference type="UCSC" id="uc009mgh.1">
    <property type="organism name" value="mouse"/>
</dbReference>
<dbReference type="AGR" id="MGI:1914068"/>
<dbReference type="CTD" id="79086"/>
<dbReference type="MGI" id="MGI:1914068">
    <property type="gene designation" value="Smim7"/>
</dbReference>
<dbReference type="VEuPathDB" id="HostDB:ENSMUSG00000044600"/>
<dbReference type="eggNOG" id="ENOG502S4E0">
    <property type="taxonomic scope" value="Eukaryota"/>
</dbReference>
<dbReference type="GeneTree" id="ENSGT00390000014626"/>
<dbReference type="HOGENOM" id="CLU_181165_0_0_1"/>
<dbReference type="InParanoid" id="Q5RKS2"/>
<dbReference type="OMA" id="LWNILVM"/>
<dbReference type="OrthoDB" id="10047572at2759"/>
<dbReference type="PhylomeDB" id="Q5RKS2"/>
<dbReference type="TreeFam" id="TF332999"/>
<dbReference type="BioGRID-ORCS" id="66818">
    <property type="hits" value="4 hits in 77 CRISPR screens"/>
</dbReference>
<dbReference type="ChiTaRS" id="Smim7">
    <property type="organism name" value="mouse"/>
</dbReference>
<dbReference type="PRO" id="PR:Q5RKS2"/>
<dbReference type="Proteomes" id="UP000000589">
    <property type="component" value="Chromosome 8"/>
</dbReference>
<dbReference type="RNAct" id="Q5RKS2">
    <property type="molecule type" value="protein"/>
</dbReference>
<dbReference type="Bgee" id="ENSMUSG00000044600">
    <property type="expression patterns" value="Expressed in aortic valve and 271 other cell types or tissues"/>
</dbReference>
<dbReference type="ExpressionAtlas" id="Q5RKS2">
    <property type="expression patterns" value="baseline and differential"/>
</dbReference>
<dbReference type="GO" id="GO:0016020">
    <property type="term" value="C:membrane"/>
    <property type="evidence" value="ECO:0007669"/>
    <property type="project" value="UniProtKB-SubCell"/>
</dbReference>
<dbReference type="InterPro" id="IPR037659">
    <property type="entry name" value="SMIM7"/>
</dbReference>
<dbReference type="PANTHER" id="PTHR28622">
    <property type="entry name" value="SMALL INTEGRAL MEMBRANE PROTEIN 7"/>
    <property type="match status" value="1"/>
</dbReference>
<dbReference type="PANTHER" id="PTHR28622:SF1">
    <property type="entry name" value="SMALL INTEGRAL MEMBRANE PROTEIN 7"/>
    <property type="match status" value="1"/>
</dbReference>
<comment type="subcellular location">
    <subcellularLocation>
        <location evidence="2">Membrane</location>
        <topology evidence="2">Single-pass type I membrane protein</topology>
    </subcellularLocation>
</comment>
<comment type="similarity">
    <text evidence="2">Belongs to the SMIM7 family.</text>
</comment>